<dbReference type="EMBL" id="AAEX03004450">
    <property type="status" value="NOT_ANNOTATED_CDS"/>
    <property type="molecule type" value="Genomic_DNA"/>
</dbReference>
<dbReference type="EMBL" id="U68062">
    <property type="protein sequence ID" value="AAB09034.1"/>
    <property type="molecule type" value="Genomic_DNA"/>
</dbReference>
<dbReference type="RefSeq" id="NP_001300793.1">
    <property type="nucleotide sequence ID" value="NM_001313864.1"/>
</dbReference>
<dbReference type="RefSeq" id="XP_005621477.1">
    <property type="nucleotide sequence ID" value="XM_005621420.2"/>
</dbReference>
<dbReference type="SMR" id="Q95165"/>
<dbReference type="FunCoup" id="Q95165">
    <property type="interactions" value="41"/>
</dbReference>
<dbReference type="STRING" id="9615.ENSCAFP00000061443"/>
<dbReference type="GlyCosmos" id="Q95165">
    <property type="glycosylation" value="2 sites, No reported glycans"/>
</dbReference>
<dbReference type="PaxDb" id="9612-ENSCAFP00000026101"/>
<dbReference type="Ensembl" id="ENSCAFT00000028060.5">
    <property type="protein sequence ID" value="ENSCAFP00000026101.3"/>
    <property type="gene ID" value="ENSCAFG00000017687.5"/>
</dbReference>
<dbReference type="GeneID" id="489972"/>
<dbReference type="KEGG" id="cfa:489972"/>
<dbReference type="CTD" id="6338"/>
<dbReference type="VGNC" id="VGNC:45926">
    <property type="gene designation" value="SCNN1B"/>
</dbReference>
<dbReference type="eggNOG" id="KOG4294">
    <property type="taxonomic scope" value="Eukaryota"/>
</dbReference>
<dbReference type="HOGENOM" id="CLU_020415_0_0_1"/>
<dbReference type="InParanoid" id="Q95165"/>
<dbReference type="OMA" id="QRETCIS"/>
<dbReference type="OrthoDB" id="6502088at2759"/>
<dbReference type="TreeFam" id="TF330663"/>
<dbReference type="Proteomes" id="UP000002254">
    <property type="component" value="Chromosome 6"/>
</dbReference>
<dbReference type="Proteomes" id="UP000694429">
    <property type="component" value="Unplaced"/>
</dbReference>
<dbReference type="Proteomes" id="UP000694542">
    <property type="component" value="Unplaced"/>
</dbReference>
<dbReference type="Proteomes" id="UP000805418">
    <property type="component" value="Unplaced"/>
</dbReference>
<dbReference type="Bgee" id="ENSCAFG00000017687">
    <property type="expression patterns" value="Expressed in metanephros cortex and 38 other cell types or tissues"/>
</dbReference>
<dbReference type="GO" id="GO:0016324">
    <property type="term" value="C:apical plasma membrane"/>
    <property type="evidence" value="ECO:0000250"/>
    <property type="project" value="UniProtKB"/>
</dbReference>
<dbReference type="GO" id="GO:0030659">
    <property type="term" value="C:cytoplasmic vesicle membrane"/>
    <property type="evidence" value="ECO:0007669"/>
    <property type="project" value="UniProtKB-SubCell"/>
</dbReference>
<dbReference type="GO" id="GO:0005886">
    <property type="term" value="C:plasma membrane"/>
    <property type="evidence" value="ECO:0000250"/>
    <property type="project" value="UniProtKB"/>
</dbReference>
<dbReference type="GO" id="GO:0034706">
    <property type="term" value="C:sodium channel complex"/>
    <property type="evidence" value="ECO:0000250"/>
    <property type="project" value="UniProtKB"/>
</dbReference>
<dbReference type="GO" id="GO:0015280">
    <property type="term" value="F:ligand-gated sodium channel activity"/>
    <property type="evidence" value="ECO:0000318"/>
    <property type="project" value="GO_Central"/>
</dbReference>
<dbReference type="GO" id="GO:0050891">
    <property type="term" value="P:multicellular organismal-level water homeostasis"/>
    <property type="evidence" value="ECO:0000250"/>
    <property type="project" value="UniProtKB"/>
</dbReference>
<dbReference type="GO" id="GO:0055078">
    <property type="term" value="P:sodium ion homeostasis"/>
    <property type="evidence" value="ECO:0000250"/>
    <property type="project" value="UniProtKB"/>
</dbReference>
<dbReference type="GO" id="GO:0035725">
    <property type="term" value="P:sodium ion transmembrane transport"/>
    <property type="evidence" value="ECO:0000250"/>
    <property type="project" value="UniProtKB"/>
</dbReference>
<dbReference type="FunFam" id="2.60.470.10:FF:000003">
    <property type="entry name" value="Amiloride-sensitive sodium channel subunit beta"/>
    <property type="match status" value="1"/>
</dbReference>
<dbReference type="FunFam" id="1.10.287.770:FF:000002">
    <property type="entry name" value="Amiloride-sensitive sodium channel subunit beta 1"/>
    <property type="match status" value="1"/>
</dbReference>
<dbReference type="FunFam" id="1.10.287.820:FF:000006">
    <property type="entry name" value="Amiloride-sensitive sodium channel subunit beta-2"/>
    <property type="match status" value="1"/>
</dbReference>
<dbReference type="Gene3D" id="2.60.470.10">
    <property type="entry name" value="Acid-sensing ion channels like domains"/>
    <property type="match status" value="1"/>
</dbReference>
<dbReference type="Gene3D" id="1.10.287.770">
    <property type="entry name" value="YojJ-like"/>
    <property type="match status" value="1"/>
</dbReference>
<dbReference type="InterPro" id="IPR001873">
    <property type="entry name" value="ENaC"/>
</dbReference>
<dbReference type="InterPro" id="IPR004724">
    <property type="entry name" value="ENaC_chordates"/>
</dbReference>
<dbReference type="InterPro" id="IPR020903">
    <property type="entry name" value="ENaC_CS"/>
</dbReference>
<dbReference type="NCBIfam" id="TIGR00859">
    <property type="entry name" value="ENaC"/>
    <property type="match status" value="1"/>
</dbReference>
<dbReference type="PANTHER" id="PTHR11690:SF18">
    <property type="entry name" value="AMILORIDE-SENSITIVE SODIUM CHANNEL SUBUNIT BETA"/>
    <property type="match status" value="1"/>
</dbReference>
<dbReference type="PANTHER" id="PTHR11690">
    <property type="entry name" value="AMILORIDE-SENSITIVE SODIUM CHANNEL-RELATED"/>
    <property type="match status" value="1"/>
</dbReference>
<dbReference type="Pfam" id="PF00858">
    <property type="entry name" value="ASC"/>
    <property type="match status" value="1"/>
</dbReference>
<dbReference type="PRINTS" id="PR01078">
    <property type="entry name" value="AMINACHANNEL"/>
</dbReference>
<dbReference type="PROSITE" id="PS01206">
    <property type="entry name" value="ASC"/>
    <property type="match status" value="1"/>
</dbReference>
<sequence length="641" mass="72654">MHLKKYLLKGLHRLQKGPGYSYKELLVWYCNNTNTHGPKRIICEGPKKKAMWFLITLLFTSLVCWQWGVFIRTYLSWEVSVSLSLGFKTMDFPAVTICNASPFQYSKVKHLLRDLDELMEAVLERILAPEHSDANATRTLNVTMWNYTPLVLIDEQNPHCPVVLDLFGDIHNGSASSSPAPARSCTVHGCKVAMRLCSLNGTVCTFRNFTSATQAVTEWYLLQATNIFSQVPQRELVEMSYPAERLILACLFGAEPCSYRNFTSIFHPDYGNCYIFNWGMTEKALPSANPGAEFGLKLILDIGQEDYVPFLTSTAGARLMLHEQRSYPFIKDEGIYAMSGTETSIGVLVDRLERKGEPYSQCTVNGSDVPVRNLYSDYNTTYSIQACIRSCFQDHMIQNCSCAHYLYPLPRGERYCNNREFPDWAYCYSHLRMSVAQRETCINMCKESCNDTQYKMTISMADWPSEASEDWIFHVLSQERDQSTNITLSRKGVVKLNIYFQEFNYRTIEESAANNIVWLLSNLGGQFGFWMGGSVLCLIEFGEILIDFVWITIIKLVAFAKSLRQKRAQARYAGPPPTVAELVEAHTNFGFQPDVARPGPDPGTYPDEQTLPIPGTPPPNYDSLRLQPLDVIESDSEGDAI</sequence>
<keyword id="KW-1003">Cell membrane</keyword>
<keyword id="KW-0968">Cytoplasmic vesicle</keyword>
<keyword id="KW-1015">Disulfide bond</keyword>
<keyword id="KW-0325">Glycoprotein</keyword>
<keyword id="KW-0407">Ion channel</keyword>
<keyword id="KW-0406">Ion transport</keyword>
<keyword id="KW-0472">Membrane</keyword>
<keyword id="KW-0597">Phosphoprotein</keyword>
<keyword id="KW-1185">Reference proteome</keyword>
<keyword id="KW-0915">Sodium</keyword>
<keyword id="KW-0894">Sodium channel</keyword>
<keyword id="KW-0739">Sodium transport</keyword>
<keyword id="KW-0812">Transmembrane</keyword>
<keyword id="KW-1133">Transmembrane helix</keyword>
<keyword id="KW-0813">Transport</keyword>
<keyword id="KW-0832">Ubl conjugation</keyword>
<comment type="function">
    <text evidence="3">This is one of the three pore-forming subunits of the heterotrimeric epithelial sodium channel (ENaC), a critical regulator of sodium balance and fluid homeostasis. ENaC operates in epithelial tissues, where it mediates the electrodiffusion of sodium ions from extracellular fluid through the apical membrane of cells, with water following osmotically. It plays a key role in maintaining sodium homeostasis through electrogenic sodium reabsorption in the kidneys. Additionally, ENaC is essential for airway surface liquid homeostasis, which is crucial for proper mucus clearance.</text>
</comment>
<comment type="catalytic activity">
    <reaction evidence="3">
        <text>Na(+)(in) = Na(+)(out)</text>
        <dbReference type="Rhea" id="RHEA:34963"/>
        <dbReference type="ChEBI" id="CHEBI:29101"/>
    </reaction>
</comment>
<comment type="activity regulation">
    <text evidence="3">Originally identified and characterized by its inhibition by the diuretic drug amiloride.</text>
</comment>
<comment type="subunit">
    <text evidence="3">Component of the heterotrimeric epithelial sodium channel (ENaC) composed of an alpha/SCNN1A, a beta/SCNN1B and a gamma/SCNN1G subunit. An additional delta/SCNN1D subunit can replace the alpha/SCNN1A subunit to form an alternative channel with specific properties. Interacts with WWP1 (via WW domains). Interacts with WWP2 (via WW domains); inhibits the channel. Interacts with the full-length immature form of PCSK9 (pro-PCSK9). Interacts (N-glycosylated) with BPIFA1; the interaction is direct and inhibits the proteolytic processing of SCNN1A and SCNN1G and the activation of ENaC.</text>
</comment>
<comment type="subcellular location">
    <subcellularLocation>
        <location evidence="3">Apical cell membrane</location>
        <topology evidence="3">Multi-pass membrane protein</topology>
    </subcellularLocation>
    <subcellularLocation>
        <location evidence="2">Cytoplasmic vesicle membrane</location>
        <topology evidence="3">Multi-pass membrane protein</topology>
    </subcellularLocation>
</comment>
<comment type="PTM">
    <text evidence="2 3">Ubiquitinated. Can be ubiquitinated at multiple sites and undergo monoubiquitination and polyubiquitination. Ubiquitination by NEDD4 or NEDD4L inhibits the ENaC channel through endocytosis, intracellular retention and degradation of its individual subunits (By similarity). However, some studies could not confirm the ubiquitination of this subunit of the ENaC (By similarity).</text>
</comment>
<comment type="PTM">
    <text evidence="2">Phosphorylated on serine and threonine residues. Aldosterone and insulin increase the basal level of phosphorylation.</text>
</comment>
<comment type="PTM">
    <text evidence="3">N-glycosylated. N-glycosylation is required for interaction with BPIFA1.</text>
</comment>
<comment type="similarity">
    <text evidence="7">Belongs to the amiloride-sensitive sodium channel (TC 1.A.6) family. SCNN1B subfamily.</text>
</comment>
<gene>
    <name evidence="3" type="primary">SCNN1B</name>
</gene>
<evidence type="ECO:0000250" key="1">
    <source>
        <dbReference type="UniProtKB" id="P37089"/>
    </source>
</evidence>
<evidence type="ECO:0000250" key="2">
    <source>
        <dbReference type="UniProtKB" id="P37090"/>
    </source>
</evidence>
<evidence type="ECO:0000250" key="3">
    <source>
        <dbReference type="UniProtKB" id="P51168"/>
    </source>
</evidence>
<evidence type="ECO:0000250" key="4">
    <source>
        <dbReference type="UniProtKB" id="Q9WU38"/>
    </source>
</evidence>
<evidence type="ECO:0000255" key="5"/>
<evidence type="ECO:0000256" key="6">
    <source>
        <dbReference type="SAM" id="MobiDB-lite"/>
    </source>
</evidence>
<evidence type="ECO:0000305" key="7"/>
<accession>Q95165</accession>
<accession>F1PGD1</accession>
<protein>
    <recommendedName>
        <fullName evidence="3">Epithelial sodium channel subunit beta</fullName>
    </recommendedName>
    <alternativeName>
        <fullName>Amiloride-sensitive sodium channel subunit beta</fullName>
    </alternativeName>
    <alternativeName>
        <fullName>Beta-NaCH</fullName>
    </alternativeName>
    <alternativeName>
        <fullName>Epithelial Na(+) channel subunit beta</fullName>
        <shortName>Beta-ENaC</shortName>
    </alternativeName>
    <alternativeName>
        <fullName>Nonvoltage-gated sodium channel 1 subunit beta</fullName>
    </alternativeName>
    <alternativeName>
        <fullName>SCNEB</fullName>
    </alternativeName>
</protein>
<name>SCNNB_CANLF</name>
<feature type="chain" id="PRO_0000181267" description="Epithelial sodium channel subunit beta">
    <location>
        <begin position="1"/>
        <end position="641"/>
    </location>
</feature>
<feature type="topological domain" description="Cytoplasmic" evidence="1">
    <location>
        <begin position="1"/>
        <end position="50"/>
    </location>
</feature>
<feature type="transmembrane region" description="Helical; Name=1" evidence="5">
    <location>
        <begin position="51"/>
        <end position="71"/>
    </location>
</feature>
<feature type="topological domain" description="Extracellular" evidence="1">
    <location>
        <begin position="72"/>
        <end position="533"/>
    </location>
</feature>
<feature type="transmembrane region" description="Helical; Name=2" evidence="5">
    <location>
        <begin position="534"/>
        <end position="554"/>
    </location>
</feature>
<feature type="topological domain" description="Cytoplasmic" evidence="1">
    <location>
        <begin position="555"/>
        <end position="641"/>
    </location>
</feature>
<feature type="region of interest" description="Disordered" evidence="6">
    <location>
        <begin position="593"/>
        <end position="624"/>
    </location>
</feature>
<feature type="short sequence motif" description="PY motif; recruits WW domain-containing proteins and is thereby required for ubiquitination and inhibition of the channel by NEDD4 and NEDD4L" evidence="3">
    <location>
        <begin position="617"/>
        <end position="621"/>
    </location>
</feature>
<feature type="modified residue" description="Phosphoserine" evidence="4">
    <location>
        <position position="634"/>
    </location>
</feature>
<feature type="modified residue" description="Phosphoserine" evidence="4">
    <location>
        <position position="636"/>
    </location>
</feature>
<feature type="glycosylation site" description="N-linked (GlcNAc...) asparagine" evidence="5">
    <location>
        <position position="141"/>
    </location>
</feature>
<feature type="glycosylation site" description="N-linked (GlcNAc...) asparagine" evidence="5">
    <location>
        <position position="261"/>
    </location>
</feature>
<feature type="disulfide bond" evidence="3">
    <location>
        <begin position="98"/>
        <end position="273"/>
    </location>
</feature>
<feature type="disulfide bond" evidence="3">
    <location>
        <begin position="185"/>
        <end position="190"/>
    </location>
</feature>
<feature type="disulfide bond" evidence="3">
    <location>
        <begin position="197"/>
        <end position="204"/>
    </location>
</feature>
<feature type="disulfide bond" evidence="3">
    <location>
        <begin position="250"/>
        <end position="257"/>
    </location>
</feature>
<feature type="disulfide bond" evidence="3">
    <location>
        <begin position="362"/>
        <end position="449"/>
    </location>
</feature>
<feature type="disulfide bond" evidence="3">
    <location>
        <begin position="387"/>
        <end position="445"/>
    </location>
</feature>
<feature type="disulfide bond" evidence="3">
    <location>
        <begin position="391"/>
        <end position="441"/>
    </location>
</feature>
<feature type="disulfide bond" evidence="3">
    <location>
        <begin position="400"/>
        <end position="427"/>
    </location>
</feature>
<feature type="disulfide bond" evidence="3">
    <location>
        <begin position="402"/>
        <end position="416"/>
    </location>
</feature>
<feature type="sequence conflict" description="In Ref. 2; AAB09034." evidence="7" ref="2">
    <original>R</original>
    <variation>Q</variation>
    <location>
        <position position="567"/>
    </location>
</feature>
<reference key="1">
    <citation type="journal article" date="2005" name="Nature">
        <title>Genome sequence, comparative analysis and haplotype structure of the domestic dog.</title>
        <authorList>
            <person name="Lindblad-Toh K."/>
            <person name="Wade C.M."/>
            <person name="Mikkelsen T.S."/>
            <person name="Karlsson E.K."/>
            <person name="Jaffe D.B."/>
            <person name="Kamal M."/>
            <person name="Clamp M."/>
            <person name="Chang J.L."/>
            <person name="Kulbokas E.J. III"/>
            <person name="Zody M.C."/>
            <person name="Mauceli E."/>
            <person name="Xie X."/>
            <person name="Breen M."/>
            <person name="Wayne R.K."/>
            <person name="Ostrander E.A."/>
            <person name="Ponting C.P."/>
            <person name="Galibert F."/>
            <person name="Smith D.R."/>
            <person name="deJong P.J."/>
            <person name="Kirkness E.F."/>
            <person name="Alvarez P."/>
            <person name="Biagi T."/>
            <person name="Brockman W."/>
            <person name="Butler J."/>
            <person name="Chin C.-W."/>
            <person name="Cook A."/>
            <person name="Cuff J."/>
            <person name="Daly M.J."/>
            <person name="DeCaprio D."/>
            <person name="Gnerre S."/>
            <person name="Grabherr M."/>
            <person name="Kellis M."/>
            <person name="Kleber M."/>
            <person name="Bardeleben C."/>
            <person name="Goodstadt L."/>
            <person name="Heger A."/>
            <person name="Hitte C."/>
            <person name="Kim L."/>
            <person name="Koepfli K.-P."/>
            <person name="Parker H.G."/>
            <person name="Pollinger J.P."/>
            <person name="Searle S.M.J."/>
            <person name="Sutter N.B."/>
            <person name="Thomas R."/>
            <person name="Webber C."/>
            <person name="Baldwin J."/>
            <person name="Abebe A."/>
            <person name="Abouelleil A."/>
            <person name="Aftuck L."/>
            <person name="Ait-Zahra M."/>
            <person name="Aldredge T."/>
            <person name="Allen N."/>
            <person name="An P."/>
            <person name="Anderson S."/>
            <person name="Antoine C."/>
            <person name="Arachchi H."/>
            <person name="Aslam A."/>
            <person name="Ayotte L."/>
            <person name="Bachantsang P."/>
            <person name="Barry A."/>
            <person name="Bayul T."/>
            <person name="Benamara M."/>
            <person name="Berlin A."/>
            <person name="Bessette D."/>
            <person name="Blitshteyn B."/>
            <person name="Bloom T."/>
            <person name="Blye J."/>
            <person name="Boguslavskiy L."/>
            <person name="Bonnet C."/>
            <person name="Boukhgalter B."/>
            <person name="Brown A."/>
            <person name="Cahill P."/>
            <person name="Calixte N."/>
            <person name="Camarata J."/>
            <person name="Cheshatsang Y."/>
            <person name="Chu J."/>
            <person name="Citroen M."/>
            <person name="Collymore A."/>
            <person name="Cooke P."/>
            <person name="Dawoe T."/>
            <person name="Daza R."/>
            <person name="Decktor K."/>
            <person name="DeGray S."/>
            <person name="Dhargay N."/>
            <person name="Dooley K."/>
            <person name="Dooley K."/>
            <person name="Dorje P."/>
            <person name="Dorjee K."/>
            <person name="Dorris L."/>
            <person name="Duffey N."/>
            <person name="Dupes A."/>
            <person name="Egbiremolen O."/>
            <person name="Elong R."/>
            <person name="Falk J."/>
            <person name="Farina A."/>
            <person name="Faro S."/>
            <person name="Ferguson D."/>
            <person name="Ferreira P."/>
            <person name="Fisher S."/>
            <person name="FitzGerald M."/>
            <person name="Foley K."/>
            <person name="Foley C."/>
            <person name="Franke A."/>
            <person name="Friedrich D."/>
            <person name="Gage D."/>
            <person name="Garber M."/>
            <person name="Gearin G."/>
            <person name="Giannoukos G."/>
            <person name="Goode T."/>
            <person name="Goyette A."/>
            <person name="Graham J."/>
            <person name="Grandbois E."/>
            <person name="Gyaltsen K."/>
            <person name="Hafez N."/>
            <person name="Hagopian D."/>
            <person name="Hagos B."/>
            <person name="Hall J."/>
            <person name="Healy C."/>
            <person name="Hegarty R."/>
            <person name="Honan T."/>
            <person name="Horn A."/>
            <person name="Houde N."/>
            <person name="Hughes L."/>
            <person name="Hunnicutt L."/>
            <person name="Husby M."/>
            <person name="Jester B."/>
            <person name="Jones C."/>
            <person name="Kamat A."/>
            <person name="Kanga B."/>
            <person name="Kells C."/>
            <person name="Khazanovich D."/>
            <person name="Kieu A.C."/>
            <person name="Kisner P."/>
            <person name="Kumar M."/>
            <person name="Lance K."/>
            <person name="Landers T."/>
            <person name="Lara M."/>
            <person name="Lee W."/>
            <person name="Leger J.-P."/>
            <person name="Lennon N."/>
            <person name="Leuper L."/>
            <person name="LeVine S."/>
            <person name="Liu J."/>
            <person name="Liu X."/>
            <person name="Lokyitsang Y."/>
            <person name="Lokyitsang T."/>
            <person name="Lui A."/>
            <person name="Macdonald J."/>
            <person name="Major J."/>
            <person name="Marabella R."/>
            <person name="Maru K."/>
            <person name="Matthews C."/>
            <person name="McDonough S."/>
            <person name="Mehta T."/>
            <person name="Meldrim J."/>
            <person name="Melnikov A."/>
            <person name="Meneus L."/>
            <person name="Mihalev A."/>
            <person name="Mihova T."/>
            <person name="Miller K."/>
            <person name="Mittelman R."/>
            <person name="Mlenga V."/>
            <person name="Mulrain L."/>
            <person name="Munson G."/>
            <person name="Navidi A."/>
            <person name="Naylor J."/>
            <person name="Nguyen T."/>
            <person name="Nguyen N."/>
            <person name="Nguyen C."/>
            <person name="Nguyen T."/>
            <person name="Nicol R."/>
            <person name="Norbu N."/>
            <person name="Norbu C."/>
            <person name="Novod N."/>
            <person name="Nyima T."/>
            <person name="Olandt P."/>
            <person name="O'Neill B."/>
            <person name="O'Neill K."/>
            <person name="Osman S."/>
            <person name="Oyono L."/>
            <person name="Patti C."/>
            <person name="Perrin D."/>
            <person name="Phunkhang P."/>
            <person name="Pierre F."/>
            <person name="Priest M."/>
            <person name="Rachupka A."/>
            <person name="Raghuraman S."/>
            <person name="Rameau R."/>
            <person name="Ray V."/>
            <person name="Raymond C."/>
            <person name="Rege F."/>
            <person name="Rise C."/>
            <person name="Rogers J."/>
            <person name="Rogov P."/>
            <person name="Sahalie J."/>
            <person name="Settipalli S."/>
            <person name="Sharpe T."/>
            <person name="Shea T."/>
            <person name="Sheehan M."/>
            <person name="Sherpa N."/>
            <person name="Shi J."/>
            <person name="Shih D."/>
            <person name="Sloan J."/>
            <person name="Smith C."/>
            <person name="Sparrow T."/>
            <person name="Stalker J."/>
            <person name="Stange-Thomann N."/>
            <person name="Stavropoulos S."/>
            <person name="Stone C."/>
            <person name="Stone S."/>
            <person name="Sykes S."/>
            <person name="Tchuinga P."/>
            <person name="Tenzing P."/>
            <person name="Tesfaye S."/>
            <person name="Thoulutsang D."/>
            <person name="Thoulutsang Y."/>
            <person name="Topham K."/>
            <person name="Topping I."/>
            <person name="Tsamla T."/>
            <person name="Vassiliev H."/>
            <person name="Venkataraman V."/>
            <person name="Vo A."/>
            <person name="Wangchuk T."/>
            <person name="Wangdi T."/>
            <person name="Weiand M."/>
            <person name="Wilkinson J."/>
            <person name="Wilson A."/>
            <person name="Yadav S."/>
            <person name="Yang S."/>
            <person name="Yang X."/>
            <person name="Young G."/>
            <person name="Yu Q."/>
            <person name="Zainoun J."/>
            <person name="Zembek L."/>
            <person name="Zimmer A."/>
            <person name="Lander E.S."/>
        </authorList>
    </citation>
    <scope>NUCLEOTIDE SEQUENCE [LARGE SCALE GENOMIC DNA]</scope>
    <source>
        <strain>Boxer</strain>
    </source>
</reference>
<reference key="2">
    <citation type="journal article" date="1998" name="Anim. Genet.">
        <title>An AvaII PCR/RFLP in an exon of the canine gene for the beta subunit of the amiloride-sensitive sodium channel (SCNN1B).</title>
        <authorList>
            <person name="Zhou T."/>
            <person name="Nonneman D."/>
            <person name="Shibuya H."/>
            <person name="Khan S."/>
            <person name="Liu P.C."/>
            <person name="Johnson G.S."/>
        </authorList>
    </citation>
    <scope>NUCLEOTIDE SEQUENCE [GENOMIC DNA] OF 531-618</scope>
</reference>
<proteinExistence type="inferred from homology"/>
<organism>
    <name type="scientific">Canis lupus familiaris</name>
    <name type="common">Dog</name>
    <name type="synonym">Canis familiaris</name>
    <dbReference type="NCBI Taxonomy" id="9615"/>
    <lineage>
        <taxon>Eukaryota</taxon>
        <taxon>Metazoa</taxon>
        <taxon>Chordata</taxon>
        <taxon>Craniata</taxon>
        <taxon>Vertebrata</taxon>
        <taxon>Euteleostomi</taxon>
        <taxon>Mammalia</taxon>
        <taxon>Eutheria</taxon>
        <taxon>Laurasiatheria</taxon>
        <taxon>Carnivora</taxon>
        <taxon>Caniformia</taxon>
        <taxon>Canidae</taxon>
        <taxon>Canis</taxon>
    </lineage>
</organism>